<keyword id="KW-0066">ATP synthesis</keyword>
<keyword id="KW-0138">CF(0)</keyword>
<keyword id="KW-0150">Chloroplast</keyword>
<keyword id="KW-0375">Hydrogen ion transport</keyword>
<keyword id="KW-0406">Ion transport</keyword>
<keyword id="KW-0472">Membrane</keyword>
<keyword id="KW-0934">Plastid</keyword>
<keyword id="KW-0793">Thylakoid</keyword>
<keyword id="KW-0812">Transmembrane</keyword>
<keyword id="KW-1133">Transmembrane helix</keyword>
<keyword id="KW-0813">Transport</keyword>
<geneLocation type="chloroplast"/>
<evidence type="ECO:0000255" key="1">
    <source>
        <dbReference type="HAMAP-Rule" id="MF_01393"/>
    </source>
</evidence>
<gene>
    <name evidence="1" type="primary">atpI</name>
</gene>
<protein>
    <recommendedName>
        <fullName evidence="1">ATP synthase subunit a, chloroplastic</fullName>
    </recommendedName>
    <alternativeName>
        <fullName evidence="1">ATP synthase F0 sector subunit a</fullName>
    </alternativeName>
    <alternativeName>
        <fullName evidence="1">F-ATPase subunit IV</fullName>
    </alternativeName>
</protein>
<name>ATPI_OCHNE</name>
<proteinExistence type="inferred from homology"/>
<dbReference type="EMBL" id="X99078">
    <property type="protein sequence ID" value="CAA67535.1"/>
    <property type="molecule type" value="Genomic_DNA"/>
</dbReference>
<dbReference type="SMR" id="Q40607"/>
<dbReference type="GO" id="GO:0009535">
    <property type="term" value="C:chloroplast thylakoid membrane"/>
    <property type="evidence" value="ECO:0007669"/>
    <property type="project" value="UniProtKB-SubCell"/>
</dbReference>
<dbReference type="GO" id="GO:0005886">
    <property type="term" value="C:plasma membrane"/>
    <property type="evidence" value="ECO:0007669"/>
    <property type="project" value="UniProtKB-UniRule"/>
</dbReference>
<dbReference type="GO" id="GO:0045259">
    <property type="term" value="C:proton-transporting ATP synthase complex"/>
    <property type="evidence" value="ECO:0007669"/>
    <property type="project" value="UniProtKB-KW"/>
</dbReference>
<dbReference type="GO" id="GO:0046933">
    <property type="term" value="F:proton-transporting ATP synthase activity, rotational mechanism"/>
    <property type="evidence" value="ECO:0007669"/>
    <property type="project" value="UniProtKB-UniRule"/>
</dbReference>
<dbReference type="CDD" id="cd00310">
    <property type="entry name" value="ATP-synt_Fo_a_6"/>
    <property type="match status" value="1"/>
</dbReference>
<dbReference type="FunFam" id="1.20.120.220:FF:000001">
    <property type="entry name" value="ATP synthase subunit a, chloroplastic"/>
    <property type="match status" value="1"/>
</dbReference>
<dbReference type="Gene3D" id="1.20.120.220">
    <property type="entry name" value="ATP synthase, F0 complex, subunit A"/>
    <property type="match status" value="1"/>
</dbReference>
<dbReference type="HAMAP" id="MF_01393">
    <property type="entry name" value="ATP_synth_a_bact"/>
    <property type="match status" value="1"/>
</dbReference>
<dbReference type="InterPro" id="IPR045082">
    <property type="entry name" value="ATP_syn_F0_a_bact/chloroplast"/>
</dbReference>
<dbReference type="InterPro" id="IPR000568">
    <property type="entry name" value="ATP_synth_F0_asu"/>
</dbReference>
<dbReference type="InterPro" id="IPR023011">
    <property type="entry name" value="ATP_synth_F0_asu_AS"/>
</dbReference>
<dbReference type="InterPro" id="IPR035908">
    <property type="entry name" value="F0_ATP_A_sf"/>
</dbReference>
<dbReference type="NCBIfam" id="TIGR01131">
    <property type="entry name" value="ATP_synt_6_or_A"/>
    <property type="match status" value="1"/>
</dbReference>
<dbReference type="PANTHER" id="PTHR42823">
    <property type="entry name" value="ATP SYNTHASE SUBUNIT A, CHLOROPLASTIC"/>
    <property type="match status" value="1"/>
</dbReference>
<dbReference type="PANTHER" id="PTHR42823:SF3">
    <property type="entry name" value="ATP SYNTHASE SUBUNIT A, CHLOROPLASTIC"/>
    <property type="match status" value="1"/>
</dbReference>
<dbReference type="Pfam" id="PF00119">
    <property type="entry name" value="ATP-synt_A"/>
    <property type="match status" value="1"/>
</dbReference>
<dbReference type="PRINTS" id="PR00123">
    <property type="entry name" value="ATPASEA"/>
</dbReference>
<dbReference type="SUPFAM" id="SSF81336">
    <property type="entry name" value="F1F0 ATP synthase subunit A"/>
    <property type="match status" value="1"/>
</dbReference>
<dbReference type="PROSITE" id="PS00449">
    <property type="entry name" value="ATPASE_A"/>
    <property type="match status" value="1"/>
</dbReference>
<organism>
    <name type="scientific">Ochrosphaera neapolitana</name>
    <dbReference type="NCBI Taxonomy" id="35137"/>
    <lineage>
        <taxon>Eukaryota</taxon>
        <taxon>Haptista</taxon>
        <taxon>Haptophyta</taxon>
        <taxon>Prymnesiophyceae</taxon>
        <taxon>Coccolithales</taxon>
        <taxon>Hymenomonadaceae</taxon>
        <taxon>Ochrosphaera</taxon>
    </lineage>
</organism>
<sequence length="233" mass="25721">MFFSLAAVEVGTHLYWEIGGLEVHGQVLLITWLVLAIILTLAILGTLKLEQVPKGVQNFLESVFEYVSGIAKDQIGEYHYRPWVPFVGTLFLFIFVANWLGALIPWKLIHLPEGELAAPTNDINTTVALSLLTSISYFYAGFKEKGLGFFARYISPTPIFLPINILEDFTKPLSLSFRLFGNILADEIVVSVLCLLVPLLIPLPVMVLGIFASSVQALVFSTLSAAYIGESIE</sequence>
<reference key="1">
    <citation type="submission" date="1996-07" db="EMBL/GenBank/DDBJ databases">
        <authorList>
            <person name="Huss V.A.R."/>
            <person name="Tietze A.C."/>
            <person name="Julius C."/>
        </authorList>
    </citation>
    <scope>NUCLEOTIDE SEQUENCE [GENOMIC DNA]</scope>
    <source>
        <strain>CCMP593 / OCHRO / Plymouth163</strain>
    </source>
</reference>
<comment type="function">
    <text evidence="1">Key component of the proton channel; it plays a direct role in the translocation of protons across the membrane.</text>
</comment>
<comment type="subunit">
    <text evidence="1">F-type ATPases have 2 components, CF(1) - the catalytic core - and CF(0) - the membrane proton channel. CF(1) has five subunits: alpha(3), beta(3), gamma(1), delta(1), epsilon(1). CF(0) has four main subunits: a, b, b' and c.</text>
</comment>
<comment type="subcellular location">
    <subcellularLocation>
        <location evidence="1">Plastid</location>
        <location evidence="1">Chloroplast thylakoid membrane</location>
        <topology evidence="1">Multi-pass membrane protein</topology>
    </subcellularLocation>
</comment>
<comment type="similarity">
    <text evidence="1">Belongs to the ATPase A chain family.</text>
</comment>
<feature type="chain" id="PRO_0000002591" description="ATP synthase subunit a, chloroplastic">
    <location>
        <begin position="1"/>
        <end position="233"/>
    </location>
</feature>
<feature type="transmembrane region" description="Helical" evidence="1">
    <location>
        <begin position="27"/>
        <end position="47"/>
    </location>
</feature>
<feature type="transmembrane region" description="Helical" evidence="1">
    <location>
        <begin position="84"/>
        <end position="104"/>
    </location>
</feature>
<feature type="transmembrane region" description="Helical" evidence="1">
    <location>
        <begin position="122"/>
        <end position="142"/>
    </location>
</feature>
<feature type="transmembrane region" description="Helical" evidence="1">
    <location>
        <begin position="192"/>
        <end position="212"/>
    </location>
</feature>
<accession>Q40607</accession>